<accession>Q09YN8</accession>
<feature type="chain" id="PRO_0000260335" description="Testin">
    <location>
        <begin position="1"/>
        <end position="421"/>
    </location>
</feature>
<feature type="domain" description="PET" evidence="3">
    <location>
        <begin position="92"/>
        <end position="199"/>
    </location>
</feature>
<feature type="domain" description="LIM zinc-binding 1" evidence="2">
    <location>
        <begin position="234"/>
        <end position="297"/>
    </location>
</feature>
<feature type="domain" description="LIM zinc-binding 2" evidence="2">
    <location>
        <begin position="299"/>
        <end position="359"/>
    </location>
</feature>
<feature type="domain" description="LIM zinc-binding 3" evidence="2">
    <location>
        <begin position="362"/>
        <end position="421"/>
    </location>
</feature>
<feature type="region of interest" description="Disordered" evidence="4">
    <location>
        <begin position="133"/>
        <end position="164"/>
    </location>
</feature>
<feature type="compositionally biased region" description="Basic and acidic residues" evidence="4">
    <location>
        <begin position="155"/>
        <end position="164"/>
    </location>
</feature>
<keyword id="KW-0965">Cell junction</keyword>
<keyword id="KW-0963">Cytoplasm</keyword>
<keyword id="KW-0440">LIM domain</keyword>
<keyword id="KW-0479">Metal-binding</keyword>
<keyword id="KW-1185">Reference proteome</keyword>
<keyword id="KW-0677">Repeat</keyword>
<keyword id="KW-0862">Zinc</keyword>
<comment type="function">
    <text evidence="1">Scaffold protein that may play a role in cell adhesion, cell spreading and in the reorganization of the actin cytoskeleton. Plays a role in the regulation of cell proliferation. May act as a tumor suppressor (By similarity).</text>
</comment>
<comment type="subunit">
    <text evidence="1">Interacts via LIM domain 1 with ZYX. Interacts (via LIM domain 3) with ENAH and VASP. Interacts with ALKBH4, talin, actin, alpha-actinin, GRIP1 and PXN (By similarity). Interacts (via LIM domain 2) with ACTL7A (via N-terminus). Heterodimer with ACTL7A; the heterodimer interacts with ENAH to form a heterotrimer (By similarity).</text>
</comment>
<comment type="subcellular location">
    <subcellularLocation>
        <location evidence="1">Cytoplasm</location>
    </subcellularLocation>
    <subcellularLocation>
        <location evidence="1">Cell junction</location>
        <location evidence="1">Focal adhesion</location>
    </subcellularLocation>
    <text evidence="1">Detected along actin stress fibers.</text>
</comment>
<comment type="domain">
    <text evidence="1">The N-terminal and the C-terminal halves of the protein can associate with each other, thereby hindering interactions with ZYX.</text>
</comment>
<comment type="similarity">
    <text evidence="5">Belongs to the prickle / espinas / testin family.</text>
</comment>
<proteinExistence type="inferred from homology"/>
<reference key="1">
    <citation type="submission" date="2006-09" db="EMBL/GenBank/DDBJ databases">
        <title>NISC comparative sequencing initiative.</title>
        <authorList>
            <person name="Antonellis A."/>
            <person name="Ayele K."/>
            <person name="Benjamin B."/>
            <person name="Blakesley R.W."/>
            <person name="Boakye A."/>
            <person name="Bouffard G.G."/>
            <person name="Brinkley C."/>
            <person name="Brooks S."/>
            <person name="Chu G."/>
            <person name="Coleman H."/>
            <person name="Engle J."/>
            <person name="Gestole M."/>
            <person name="Greene A."/>
            <person name="Guan X."/>
            <person name="Gupta J."/>
            <person name="Haghighi P."/>
            <person name="Han J."/>
            <person name="Hansen N."/>
            <person name="Ho S.-L."/>
            <person name="Hu P."/>
            <person name="Hunter G."/>
            <person name="Hurle B."/>
            <person name="Idol J.R."/>
            <person name="Kwong P."/>
            <person name="Laric P."/>
            <person name="Larson S."/>
            <person name="Lee-Lin S.-Q."/>
            <person name="Legaspi R."/>
            <person name="Madden M."/>
            <person name="Maduro Q.L."/>
            <person name="Maduro V.B."/>
            <person name="Margulies E.H."/>
            <person name="Masiello C."/>
            <person name="Maskeri B."/>
            <person name="McDowell J."/>
            <person name="Mojidi H.A."/>
            <person name="Mullikin J.C."/>
            <person name="Oestreicher J.S."/>
            <person name="Park M."/>
            <person name="Portnoy M.E."/>
            <person name="Prasad A."/>
            <person name="Puri O."/>
            <person name="Reddix-Dugue N."/>
            <person name="Schandler K."/>
            <person name="Schueler M.G."/>
            <person name="Sison C."/>
            <person name="Stantripop S."/>
            <person name="Stephen E."/>
            <person name="Taye A."/>
            <person name="Thomas J.W."/>
            <person name="Thomas P.J."/>
            <person name="Tsipouri V."/>
            <person name="Ung L."/>
            <person name="Vogt J.L."/>
            <person name="Wetherby K.D."/>
            <person name="Young A."/>
            <person name="Green E.D."/>
        </authorList>
    </citation>
    <scope>NUCLEOTIDE SEQUENCE [LARGE SCALE GENOMIC DNA]</scope>
</reference>
<name>TES_RABIT</name>
<protein>
    <recommendedName>
        <fullName>Testin</fullName>
    </recommendedName>
</protein>
<evidence type="ECO:0000250" key="1"/>
<evidence type="ECO:0000255" key="2">
    <source>
        <dbReference type="PROSITE-ProRule" id="PRU00125"/>
    </source>
</evidence>
<evidence type="ECO:0000255" key="3">
    <source>
        <dbReference type="PROSITE-ProRule" id="PRU00636"/>
    </source>
</evidence>
<evidence type="ECO:0000256" key="4">
    <source>
        <dbReference type="SAM" id="MobiDB-lite"/>
    </source>
</evidence>
<evidence type="ECO:0000305" key="5"/>
<dbReference type="EMBL" id="DP000006">
    <property type="protein sequence ID" value="AAY89009.1"/>
    <property type="molecule type" value="Genomic_DNA"/>
</dbReference>
<dbReference type="RefSeq" id="NP_001164512.1">
    <property type="nucleotide sequence ID" value="NM_001171041.1"/>
</dbReference>
<dbReference type="SMR" id="Q09YN8"/>
<dbReference type="FunCoup" id="Q09YN8">
    <property type="interactions" value="158"/>
</dbReference>
<dbReference type="STRING" id="9986.ENSOCUP00000040173"/>
<dbReference type="PaxDb" id="9986-ENSOCUP00000007339"/>
<dbReference type="GeneID" id="100126564"/>
<dbReference type="KEGG" id="ocu:100126564"/>
<dbReference type="CTD" id="26136"/>
<dbReference type="eggNOG" id="KOG1704">
    <property type="taxonomic scope" value="Eukaryota"/>
</dbReference>
<dbReference type="InParanoid" id="Q09YN8"/>
<dbReference type="OrthoDB" id="10069167at2759"/>
<dbReference type="Proteomes" id="UP000001811">
    <property type="component" value="Unplaced"/>
</dbReference>
<dbReference type="GO" id="GO:0005737">
    <property type="term" value="C:cytoplasm"/>
    <property type="evidence" value="ECO:0000250"/>
    <property type="project" value="UniProtKB"/>
</dbReference>
<dbReference type="GO" id="GO:0005925">
    <property type="term" value="C:focal adhesion"/>
    <property type="evidence" value="ECO:0007669"/>
    <property type="project" value="UniProtKB-SubCell"/>
</dbReference>
<dbReference type="GO" id="GO:0008270">
    <property type="term" value="F:zinc ion binding"/>
    <property type="evidence" value="ECO:0000250"/>
    <property type="project" value="UniProtKB"/>
</dbReference>
<dbReference type="GO" id="GO:0008285">
    <property type="term" value="P:negative regulation of cell population proliferation"/>
    <property type="evidence" value="ECO:0000250"/>
    <property type="project" value="UniProtKB"/>
</dbReference>
<dbReference type="CDD" id="cd09413">
    <property type="entry name" value="LIM1_Testin"/>
    <property type="match status" value="1"/>
</dbReference>
<dbReference type="CDD" id="cd09416">
    <property type="entry name" value="LIM2_Testin"/>
    <property type="match status" value="1"/>
</dbReference>
<dbReference type="CDD" id="cd09419">
    <property type="entry name" value="LIM3_Testin"/>
    <property type="match status" value="1"/>
</dbReference>
<dbReference type="CDD" id="cd09829">
    <property type="entry name" value="PET_testin"/>
    <property type="match status" value="1"/>
</dbReference>
<dbReference type="FunFam" id="2.10.110.10:FF:000061">
    <property type="entry name" value="Testin"/>
    <property type="match status" value="1"/>
</dbReference>
<dbReference type="FunFam" id="2.10.110.10:FF:000065">
    <property type="entry name" value="Testin"/>
    <property type="match status" value="1"/>
</dbReference>
<dbReference type="FunFam" id="2.10.110.10:FF:000005">
    <property type="entry name" value="Testin isoform 1"/>
    <property type="match status" value="1"/>
</dbReference>
<dbReference type="Gene3D" id="2.10.110.10">
    <property type="entry name" value="Cysteine Rich Protein"/>
    <property type="match status" value="3"/>
</dbReference>
<dbReference type="InterPro" id="IPR034958">
    <property type="entry name" value="LIM1_Testin"/>
</dbReference>
<dbReference type="InterPro" id="IPR034959">
    <property type="entry name" value="LIM2_Testin"/>
</dbReference>
<dbReference type="InterPro" id="IPR034960">
    <property type="entry name" value="LIM3_Testin"/>
</dbReference>
<dbReference type="InterPro" id="IPR010442">
    <property type="entry name" value="PET_domain"/>
</dbReference>
<dbReference type="InterPro" id="IPR033724">
    <property type="entry name" value="PET_testin"/>
</dbReference>
<dbReference type="InterPro" id="IPR047120">
    <property type="entry name" value="Pk/Esn/Tes"/>
</dbReference>
<dbReference type="InterPro" id="IPR001781">
    <property type="entry name" value="Znf_LIM"/>
</dbReference>
<dbReference type="PANTHER" id="PTHR24211">
    <property type="entry name" value="LIM DOMAIN-CONTAINING PROTEIN"/>
    <property type="match status" value="1"/>
</dbReference>
<dbReference type="PANTHER" id="PTHR24211:SF1">
    <property type="entry name" value="TESTIN"/>
    <property type="match status" value="1"/>
</dbReference>
<dbReference type="Pfam" id="PF00412">
    <property type="entry name" value="LIM"/>
    <property type="match status" value="3"/>
</dbReference>
<dbReference type="Pfam" id="PF06297">
    <property type="entry name" value="PET"/>
    <property type="match status" value="1"/>
</dbReference>
<dbReference type="SMART" id="SM00132">
    <property type="entry name" value="LIM"/>
    <property type="match status" value="3"/>
</dbReference>
<dbReference type="SUPFAM" id="SSF57716">
    <property type="entry name" value="Glucocorticoid receptor-like (DNA-binding domain)"/>
    <property type="match status" value="2"/>
</dbReference>
<dbReference type="PROSITE" id="PS00478">
    <property type="entry name" value="LIM_DOMAIN_1"/>
    <property type="match status" value="2"/>
</dbReference>
<dbReference type="PROSITE" id="PS50023">
    <property type="entry name" value="LIM_DOMAIN_2"/>
    <property type="match status" value="3"/>
</dbReference>
<dbReference type="PROSITE" id="PS51303">
    <property type="entry name" value="PET"/>
    <property type="match status" value="1"/>
</dbReference>
<gene>
    <name type="primary">TES</name>
</gene>
<organism>
    <name type="scientific">Oryctolagus cuniculus</name>
    <name type="common">Rabbit</name>
    <dbReference type="NCBI Taxonomy" id="9986"/>
    <lineage>
        <taxon>Eukaryota</taxon>
        <taxon>Metazoa</taxon>
        <taxon>Chordata</taxon>
        <taxon>Craniata</taxon>
        <taxon>Vertebrata</taxon>
        <taxon>Euteleostomi</taxon>
        <taxon>Mammalia</taxon>
        <taxon>Eutheria</taxon>
        <taxon>Euarchontoglires</taxon>
        <taxon>Glires</taxon>
        <taxon>Lagomorpha</taxon>
        <taxon>Leporidae</taxon>
        <taxon>Oryctolagus</taxon>
    </lineage>
</organism>
<sequence length="421" mass="47833">MDLDSKMKKMGLGHEQGFGAPCLKCKEKCEGFELHFWRKICRNCKCGQEEHDVLLSNEEDRKVGRLFEDTKYTTLIAKLKTDGIPMYKRNVMILTNPVAAKKNVSINTVTYEWAPPVQNQALARQYMQMLPKEKQPVAGSEGAQYRKKQLAKQLPAHDQDPSKCHELSPKEVKEMEQFVKKYKSEALGVGDVKLPYEMGGPSPDKLYIPAGDRSTPAALGPMESKPAECKGTQYFCYCCKLSMKEGDPAIYAERAGYDKLWHPACFVCSTCSELLVDMIYFWKNGKLFCGRHYCDSEKPRCAGCDELIFSNEYTQAENQNWHLKHFCCFDCDNILAGEIYVMVNDKPVCKPCYVKNHAVVCQGCHNAIDPEVQRVTYNDFSWHASTQCFLCSCCSKCLIGQKFMPVEGMVFCSVECKKMMS</sequence>